<protein>
    <recommendedName>
        <fullName>T-cell surface glycoprotein CD3 gamma chain</fullName>
    </recommendedName>
    <alternativeName>
        <fullName>T-cell receptor T3 gamma chain</fullName>
    </alternativeName>
    <cdAntigenName>CD3g</cdAntigenName>
</protein>
<dbReference type="EMBL" id="AY823638">
    <property type="protein sequence ID" value="AAV80704.1"/>
    <property type="molecule type" value="mRNA"/>
</dbReference>
<dbReference type="RefSeq" id="NP_001008686.1">
    <property type="nucleotide sequence ID" value="NM_001008686.1"/>
</dbReference>
<dbReference type="RefSeq" id="XP_005653762.1">
    <property type="nucleotide sequence ID" value="XM_005653705.3"/>
</dbReference>
<dbReference type="RefSeq" id="XP_005653763.1">
    <property type="nucleotide sequence ID" value="XM_005653706.3"/>
</dbReference>
<dbReference type="RefSeq" id="XP_005653764.1">
    <property type="nucleotide sequence ID" value="XM_005653707.3"/>
</dbReference>
<dbReference type="SMR" id="Q5PXD3"/>
<dbReference type="FunCoup" id="Q5PXD3">
    <property type="interactions" value="262"/>
</dbReference>
<dbReference type="STRING" id="9823.ENSSSCP00000043282"/>
<dbReference type="GlyCosmos" id="Q5PXD3">
    <property type="glycosylation" value="1 site, No reported glycans"/>
</dbReference>
<dbReference type="GlyGen" id="Q5PXD3">
    <property type="glycosylation" value="1 site"/>
</dbReference>
<dbReference type="PaxDb" id="9823-ENSSSCP00000016017"/>
<dbReference type="Ensembl" id="ENSSSCT00065099089.1">
    <property type="protein sequence ID" value="ENSSSCP00065043480.1"/>
    <property type="gene ID" value="ENSSSCG00065071966.1"/>
</dbReference>
<dbReference type="Ensembl" id="ENSSSCT00065099108.1">
    <property type="protein sequence ID" value="ENSSSCP00065043496.1"/>
    <property type="gene ID" value="ENSSSCG00065071966.1"/>
</dbReference>
<dbReference type="Ensembl" id="ENSSSCT00070006663.1">
    <property type="protein sequence ID" value="ENSSSCP00070005433.1"/>
    <property type="gene ID" value="ENSSSCG00070003473.1"/>
</dbReference>
<dbReference type="Ensembl" id="ENSSSCT00070006675.1">
    <property type="protein sequence ID" value="ENSSSCP00070005445.1"/>
    <property type="gene ID" value="ENSSSCG00070003473.1"/>
</dbReference>
<dbReference type="Ensembl" id="ENSSSCT00115010677">
    <property type="protein sequence ID" value="ENSSSCP00115010067"/>
    <property type="gene ID" value="ENSSSCG00115006150"/>
</dbReference>
<dbReference type="GeneID" id="494013"/>
<dbReference type="KEGG" id="ssc:494013"/>
<dbReference type="CTD" id="917"/>
<dbReference type="eggNOG" id="ENOG502S4XC">
    <property type="taxonomic scope" value="Eukaryota"/>
</dbReference>
<dbReference type="HOGENOM" id="CLU_115449_0_0_1"/>
<dbReference type="InParanoid" id="Q5PXD3"/>
<dbReference type="OMA" id="QYGHLQG"/>
<dbReference type="OrthoDB" id="8941324at2759"/>
<dbReference type="TreeFam" id="TF335892"/>
<dbReference type="Reactome" id="R-SSC-198933">
    <property type="pathway name" value="Immunoregulatory interactions between a Lymphoid and a non-Lymphoid cell"/>
</dbReference>
<dbReference type="Reactome" id="R-SSC-202424">
    <property type="pathway name" value="Downstream TCR signaling"/>
</dbReference>
<dbReference type="Reactome" id="R-SSC-202427">
    <property type="pathway name" value="Phosphorylation of CD3 and TCR zeta chains"/>
</dbReference>
<dbReference type="Reactome" id="R-SSC-202430">
    <property type="pathway name" value="Translocation of ZAP-70 to Immunological synapse"/>
</dbReference>
<dbReference type="Reactome" id="R-SSC-202433">
    <property type="pathway name" value="Generation of second messenger molecules"/>
</dbReference>
<dbReference type="Reactome" id="R-SSC-2029481">
    <property type="pathway name" value="FCGR activation"/>
</dbReference>
<dbReference type="Reactome" id="R-SSC-2029482">
    <property type="pathway name" value="Regulation of actin dynamics for phagocytic cup formation"/>
</dbReference>
<dbReference type="Reactome" id="R-SSC-2029485">
    <property type="pathway name" value="Role of phospholipids in phagocytosis"/>
</dbReference>
<dbReference type="Reactome" id="R-SSC-389948">
    <property type="pathway name" value="Co-inhibition by PD-1"/>
</dbReference>
<dbReference type="Reactome" id="R-SSC-8856825">
    <property type="pathway name" value="Cargo recognition for clathrin-mediated endocytosis"/>
</dbReference>
<dbReference type="Reactome" id="R-SSC-8856828">
    <property type="pathway name" value="Clathrin-mediated endocytosis"/>
</dbReference>
<dbReference type="Proteomes" id="UP000008227">
    <property type="component" value="Unplaced"/>
</dbReference>
<dbReference type="Proteomes" id="UP000314985">
    <property type="component" value="Chromosome 9"/>
</dbReference>
<dbReference type="Proteomes" id="UP000694570">
    <property type="component" value="Unplaced"/>
</dbReference>
<dbReference type="Proteomes" id="UP000694571">
    <property type="component" value="Unplaced"/>
</dbReference>
<dbReference type="Proteomes" id="UP000694720">
    <property type="component" value="Unplaced"/>
</dbReference>
<dbReference type="Proteomes" id="UP000694722">
    <property type="component" value="Unplaced"/>
</dbReference>
<dbReference type="Proteomes" id="UP000694723">
    <property type="component" value="Unplaced"/>
</dbReference>
<dbReference type="Proteomes" id="UP000694724">
    <property type="component" value="Unplaced"/>
</dbReference>
<dbReference type="Proteomes" id="UP000694725">
    <property type="component" value="Unplaced"/>
</dbReference>
<dbReference type="Proteomes" id="UP000694726">
    <property type="component" value="Unplaced"/>
</dbReference>
<dbReference type="Proteomes" id="UP000694727">
    <property type="component" value="Unplaced"/>
</dbReference>
<dbReference type="Proteomes" id="UP000694728">
    <property type="component" value="Unplaced"/>
</dbReference>
<dbReference type="GO" id="GO:0042105">
    <property type="term" value="C:alpha-beta T cell receptor complex"/>
    <property type="evidence" value="ECO:0000318"/>
    <property type="project" value="GO_Central"/>
</dbReference>
<dbReference type="GO" id="GO:0009897">
    <property type="term" value="C:external side of plasma membrane"/>
    <property type="evidence" value="ECO:0000318"/>
    <property type="project" value="GO_Central"/>
</dbReference>
<dbReference type="GO" id="GO:0004888">
    <property type="term" value="F:transmembrane signaling receptor activity"/>
    <property type="evidence" value="ECO:0000318"/>
    <property type="project" value="GO_Central"/>
</dbReference>
<dbReference type="GO" id="GO:0002250">
    <property type="term" value="P:adaptive immune response"/>
    <property type="evidence" value="ECO:0007669"/>
    <property type="project" value="UniProtKB-KW"/>
</dbReference>
<dbReference type="GO" id="GO:0007166">
    <property type="term" value="P:cell surface receptor signaling pathway"/>
    <property type="evidence" value="ECO:0000318"/>
    <property type="project" value="GO_Central"/>
</dbReference>
<dbReference type="GO" id="GO:0045059">
    <property type="term" value="P:positive thymic T cell selection"/>
    <property type="evidence" value="ECO:0000318"/>
    <property type="project" value="GO_Central"/>
</dbReference>
<dbReference type="FunFam" id="2.60.40.10:FF:001337">
    <property type="entry name" value="T-cell surface glycoprotein CD3 gamma chain"/>
    <property type="match status" value="1"/>
</dbReference>
<dbReference type="Gene3D" id="2.60.40.10">
    <property type="entry name" value="Immunoglobulins"/>
    <property type="match status" value="1"/>
</dbReference>
<dbReference type="InterPro" id="IPR015484">
    <property type="entry name" value="CD3_esu/gsu/dsu"/>
</dbReference>
<dbReference type="InterPro" id="IPR036179">
    <property type="entry name" value="Ig-like_dom_sf"/>
</dbReference>
<dbReference type="InterPro" id="IPR013783">
    <property type="entry name" value="Ig-like_fold"/>
</dbReference>
<dbReference type="InterPro" id="IPR032052">
    <property type="entry name" value="Ig_4"/>
</dbReference>
<dbReference type="InterPro" id="IPR003598">
    <property type="entry name" value="Ig_sub2"/>
</dbReference>
<dbReference type="InterPro" id="IPR003110">
    <property type="entry name" value="Phos_immunorcpt_sig_ITAM"/>
</dbReference>
<dbReference type="PANTHER" id="PTHR10570:SF8">
    <property type="entry name" value="T-CELL SURFACE GLYCOPROTEIN CD3 GAMMA CHAIN"/>
    <property type="match status" value="1"/>
</dbReference>
<dbReference type="PANTHER" id="PTHR10570">
    <property type="entry name" value="T-CELL SURFACE GLYCOPROTEIN CD3 GAMMA CHAIN / DELTA CHAIN"/>
    <property type="match status" value="1"/>
</dbReference>
<dbReference type="Pfam" id="PF16680">
    <property type="entry name" value="Ig_4"/>
    <property type="match status" value="1"/>
</dbReference>
<dbReference type="Pfam" id="PF02189">
    <property type="entry name" value="ITAM"/>
    <property type="match status" value="1"/>
</dbReference>
<dbReference type="SMART" id="SM00408">
    <property type="entry name" value="IGc2"/>
    <property type="match status" value="1"/>
</dbReference>
<dbReference type="SMART" id="SM00077">
    <property type="entry name" value="ITAM"/>
    <property type="match status" value="1"/>
</dbReference>
<dbReference type="SUPFAM" id="SSF48726">
    <property type="entry name" value="Immunoglobulin"/>
    <property type="match status" value="1"/>
</dbReference>
<dbReference type="PROSITE" id="PS51055">
    <property type="entry name" value="ITAM_1"/>
    <property type="match status" value="1"/>
</dbReference>
<organism>
    <name type="scientific">Sus scrofa</name>
    <name type="common">Pig</name>
    <dbReference type="NCBI Taxonomy" id="9823"/>
    <lineage>
        <taxon>Eukaryota</taxon>
        <taxon>Metazoa</taxon>
        <taxon>Chordata</taxon>
        <taxon>Craniata</taxon>
        <taxon>Vertebrata</taxon>
        <taxon>Euteleostomi</taxon>
        <taxon>Mammalia</taxon>
        <taxon>Eutheria</taxon>
        <taxon>Laurasiatheria</taxon>
        <taxon>Artiodactyla</taxon>
        <taxon>Suina</taxon>
        <taxon>Suidae</taxon>
        <taxon>Sus</taxon>
    </lineage>
</organism>
<feature type="signal peptide" evidence="3">
    <location>
        <begin position="1"/>
        <end position="22"/>
    </location>
</feature>
<feature type="chain" id="PRO_0000238449" description="T-cell surface glycoprotein CD3 gamma chain">
    <location>
        <begin position="23"/>
        <end position="182"/>
    </location>
</feature>
<feature type="topological domain" description="Extracellular" evidence="3">
    <location>
        <begin position="23"/>
        <end position="116"/>
    </location>
</feature>
<feature type="transmembrane region" description="Helical" evidence="3">
    <location>
        <begin position="117"/>
        <end position="137"/>
    </location>
</feature>
<feature type="topological domain" description="Cytoplasmic" evidence="3">
    <location>
        <begin position="138"/>
        <end position="182"/>
    </location>
</feature>
<feature type="domain" description="Ig-like">
    <location>
        <begin position="23"/>
        <end position="98"/>
    </location>
</feature>
<feature type="domain" description="ITAM" evidence="4">
    <location>
        <begin position="149"/>
        <end position="177"/>
    </location>
</feature>
<feature type="short sequence motif" description="Di-leucine motif" evidence="2">
    <location>
        <begin position="153"/>
        <end position="154"/>
    </location>
</feature>
<feature type="modified residue" description="Phosphoserine" evidence="2">
    <location>
        <position position="145"/>
    </location>
</feature>
<feature type="modified residue" description="Phosphoserine; by PKC" evidence="2">
    <location>
        <position position="148"/>
    </location>
</feature>
<feature type="glycosylation site" description="N-linked (GlcNAc...) asparagine" evidence="3">
    <location>
        <position position="66"/>
    </location>
</feature>
<feature type="disulfide bond" evidence="2">
    <location>
        <begin position="46"/>
        <end position="87"/>
    </location>
</feature>
<accession>Q5PXD3</accession>
<gene>
    <name type="primary">CD3G</name>
</gene>
<sequence length="182" mass="20461">MEQGKHLAGLILAITLLQGTMAQLKEGKHSVLLDDNREDGSVLLTCGLPDQNIRWFKDGKEICSLNNSRSTCNLGSSSKDPRGIYWCEGSKENSKRLQVYYRMCQNCIELNSATVSGFIFTEIISLFFLAVGVYFIAGQDGVRQSRASDKQTLLSNDQLYQPLKDREDDQYSHLQGNNSRKN</sequence>
<evidence type="ECO:0000250" key="1">
    <source>
        <dbReference type="UniProtKB" id="P04234"/>
    </source>
</evidence>
<evidence type="ECO:0000250" key="2">
    <source>
        <dbReference type="UniProtKB" id="P09693"/>
    </source>
</evidence>
<evidence type="ECO:0000255" key="3"/>
<evidence type="ECO:0000255" key="4">
    <source>
        <dbReference type="PROSITE-ProRule" id="PRU00379"/>
    </source>
</evidence>
<comment type="function">
    <text evidence="2">Part of the TCR-CD3 complex present on T-lymphocyte cell surface that plays an essential role in adaptive immune response. When antigen presenting cells (APCs) activate T-cell receptor (TCR), TCR-mediated signals are transmitted across the cell membrane by the CD3 chains CD3D, CD3E, CD3G and CD3Z. All CD3 chains contain immunoreceptor tyrosine-based activation motifs (ITAMs) in their cytoplasmic domain. Upon TCR engagement, these motifs become phosphorylated by Src family protein tyrosine kinases LCK and FYN, resulting in the activation of downstream signaling pathways. In addition to this role of signal transduction in T-cell activation, CD3G plays an essential role in the dynamic regulation of TCR expression at the cell surface. Indeed, constitutive TCR cycling is dependent on the di-leucine-based (diL) receptor-sorting motif present in CD3G.</text>
</comment>
<comment type="subunit">
    <text evidence="2">The TCR-CD3 complex is composed of a CD3D/CD3E and a CD3G/CD3E heterodimers that preferentially associate with TCRalpha and TCRbeta, respectively, to form TCRalpha/CD3E/CD3G and TCRbeta/CD3G/CD3E trimers. In turn, the hexamer interacts with CD3Z homodimer to form the TCR-CD3 complex. Alternatively, TCRalpha and TCRbeta can be replaced by TCRgamma and TCRdelta.</text>
</comment>
<comment type="subcellular location">
    <subcellularLocation>
        <location evidence="2">Cell membrane</location>
        <topology evidence="2">Single-pass type I membrane protein</topology>
    </subcellularLocation>
</comment>
<comment type="domain">
    <text evidence="2">A di-leucine motif and a tyrosine-based motif are individually sufficient to induce both endocytosis and delivery to lysosomes.</text>
</comment>
<comment type="PTM">
    <text evidence="2">Phosphorylated on Tyr residues after T-cell receptor triggering by LCK in association with CD4/CD8. Phosphorylated also by PKC; leading to the TCR complex down-regulation.</text>
</comment>
<comment type="PTM">
    <text evidence="1">Phosphorylated on Tyr residues after T-cell receptor triggering by LCK in association with CD4/CD8.</text>
</comment>
<keyword id="KW-1064">Adaptive immunity</keyword>
<keyword id="KW-1003">Cell membrane</keyword>
<keyword id="KW-1015">Disulfide bond</keyword>
<keyword id="KW-0325">Glycoprotein</keyword>
<keyword id="KW-0391">Immunity</keyword>
<keyword id="KW-0393">Immunoglobulin domain</keyword>
<keyword id="KW-0472">Membrane</keyword>
<keyword id="KW-0597">Phosphoprotein</keyword>
<keyword id="KW-0675">Receptor</keyword>
<keyword id="KW-1185">Reference proteome</keyword>
<keyword id="KW-0732">Signal</keyword>
<keyword id="KW-0812">Transmembrane</keyword>
<keyword id="KW-1133">Transmembrane helix</keyword>
<proteinExistence type="evidence at transcript level"/>
<reference key="1">
    <citation type="submission" date="2004-11" db="EMBL/GenBank/DDBJ databases">
        <title>Structural differences between the CD3 molecules expressed at the surface of alpha beta- and gamma delta-T cells revealed by monoclonal antibodies.</title>
        <authorList>
            <person name="Yang H."/>
            <person name="Wileman T."/>
        </authorList>
    </citation>
    <scope>NUCLEOTIDE SEQUENCE [MRNA]</scope>
</reference>
<name>CD3G_PIG</name>